<name>MTNA_PSEF5</name>
<dbReference type="EC" id="5.3.1.23" evidence="1"/>
<dbReference type="EMBL" id="CP000076">
    <property type="protein sequence ID" value="AAY93570.1"/>
    <property type="molecule type" value="Genomic_DNA"/>
</dbReference>
<dbReference type="RefSeq" id="WP_011062586.1">
    <property type="nucleotide sequence ID" value="NC_004129.6"/>
</dbReference>
<dbReference type="SMR" id="Q4K8M6"/>
<dbReference type="STRING" id="220664.PFL_4315"/>
<dbReference type="KEGG" id="pfl:PFL_4315"/>
<dbReference type="PATRIC" id="fig|220664.5.peg.4420"/>
<dbReference type="eggNOG" id="COG0182">
    <property type="taxonomic scope" value="Bacteria"/>
</dbReference>
<dbReference type="HOGENOM" id="CLU_016218_1_2_6"/>
<dbReference type="UniPathway" id="UPA00904">
    <property type="reaction ID" value="UER00874"/>
</dbReference>
<dbReference type="Proteomes" id="UP000008540">
    <property type="component" value="Chromosome"/>
</dbReference>
<dbReference type="GO" id="GO:0046523">
    <property type="term" value="F:S-methyl-5-thioribose-1-phosphate isomerase activity"/>
    <property type="evidence" value="ECO:0007669"/>
    <property type="project" value="UniProtKB-UniRule"/>
</dbReference>
<dbReference type="GO" id="GO:0019509">
    <property type="term" value="P:L-methionine salvage from methylthioadenosine"/>
    <property type="evidence" value="ECO:0007669"/>
    <property type="project" value="UniProtKB-UniRule"/>
</dbReference>
<dbReference type="FunFam" id="1.20.120.420:FF:000008">
    <property type="entry name" value="Methylthioribose-1-phosphate isomerase"/>
    <property type="match status" value="1"/>
</dbReference>
<dbReference type="FunFam" id="3.40.50.10470:FF:000006">
    <property type="entry name" value="Methylthioribose-1-phosphate isomerase"/>
    <property type="match status" value="1"/>
</dbReference>
<dbReference type="Gene3D" id="1.20.120.420">
    <property type="entry name" value="translation initiation factor eif-2b, domain 1"/>
    <property type="match status" value="1"/>
</dbReference>
<dbReference type="Gene3D" id="3.40.50.10470">
    <property type="entry name" value="Translation initiation factor eif-2b, domain 2"/>
    <property type="match status" value="1"/>
</dbReference>
<dbReference type="HAMAP" id="MF_01678">
    <property type="entry name" value="Salvage_MtnA"/>
    <property type="match status" value="1"/>
</dbReference>
<dbReference type="InterPro" id="IPR000649">
    <property type="entry name" value="IF-2B-related"/>
</dbReference>
<dbReference type="InterPro" id="IPR005251">
    <property type="entry name" value="IF-M1Pi"/>
</dbReference>
<dbReference type="InterPro" id="IPR042529">
    <property type="entry name" value="IF_2B-like_C"/>
</dbReference>
<dbReference type="InterPro" id="IPR011559">
    <property type="entry name" value="Initiation_fac_2B_a/b/d"/>
</dbReference>
<dbReference type="InterPro" id="IPR027363">
    <property type="entry name" value="M1Pi_N"/>
</dbReference>
<dbReference type="InterPro" id="IPR037171">
    <property type="entry name" value="NagB/RpiA_transferase-like"/>
</dbReference>
<dbReference type="NCBIfam" id="TIGR00524">
    <property type="entry name" value="eIF-2B_rel"/>
    <property type="match status" value="1"/>
</dbReference>
<dbReference type="NCBIfam" id="NF004326">
    <property type="entry name" value="PRK05720.1"/>
    <property type="match status" value="1"/>
</dbReference>
<dbReference type="NCBIfam" id="TIGR00512">
    <property type="entry name" value="salvage_mtnA"/>
    <property type="match status" value="1"/>
</dbReference>
<dbReference type="PANTHER" id="PTHR43475">
    <property type="entry name" value="METHYLTHIORIBOSE-1-PHOSPHATE ISOMERASE"/>
    <property type="match status" value="1"/>
</dbReference>
<dbReference type="PANTHER" id="PTHR43475:SF1">
    <property type="entry name" value="METHYLTHIORIBOSE-1-PHOSPHATE ISOMERASE"/>
    <property type="match status" value="1"/>
</dbReference>
<dbReference type="Pfam" id="PF01008">
    <property type="entry name" value="IF-2B"/>
    <property type="match status" value="1"/>
</dbReference>
<dbReference type="SUPFAM" id="SSF100950">
    <property type="entry name" value="NagB/RpiA/CoA transferase-like"/>
    <property type="match status" value="1"/>
</dbReference>
<sequence>MRDRLLAAEKVRAIEWRDSTLYLLDQRALPFEESWIAYDSAAGVAEAIRSMVVCGAPAIGISAAYGLVLAACGRSVAGGDWFAALEEDFTLLVDAAPAAVNLSWALNRMRERLERVREHADPLAALEAEALAIHESDREANLTMAQLGVDLIRRHQGNPQALLTHSNTGALATGGFGTALGVIRAAWLEGMVERVYADETRPWLQGSRLTAWELASEGIPVTVNVDAAAAHIMKTKGVTWVVVGADRITANGDVANQIGTYQLAVNAMHHGVRFMVVAPSSSIDMSLASGDDIPLAERAGEELLEIAGKRLGEGVEGFNPLFDVTPADLIDAIVTEKGVVERPDTAKMAQLMCRKRLH</sequence>
<organism>
    <name type="scientific">Pseudomonas fluorescens (strain ATCC BAA-477 / NRRL B-23932 / Pf-5)</name>
    <dbReference type="NCBI Taxonomy" id="220664"/>
    <lineage>
        <taxon>Bacteria</taxon>
        <taxon>Pseudomonadati</taxon>
        <taxon>Pseudomonadota</taxon>
        <taxon>Gammaproteobacteria</taxon>
        <taxon>Pseudomonadales</taxon>
        <taxon>Pseudomonadaceae</taxon>
        <taxon>Pseudomonas</taxon>
    </lineage>
</organism>
<keyword id="KW-0028">Amino-acid biosynthesis</keyword>
<keyword id="KW-0413">Isomerase</keyword>
<keyword id="KW-0486">Methionine biosynthesis</keyword>
<reference key="1">
    <citation type="journal article" date="2005" name="Nat. Biotechnol.">
        <title>Complete genome sequence of the plant commensal Pseudomonas fluorescens Pf-5.</title>
        <authorList>
            <person name="Paulsen I.T."/>
            <person name="Press C.M."/>
            <person name="Ravel J."/>
            <person name="Kobayashi D.Y."/>
            <person name="Myers G.S.A."/>
            <person name="Mavrodi D.V."/>
            <person name="DeBoy R.T."/>
            <person name="Seshadri R."/>
            <person name="Ren Q."/>
            <person name="Madupu R."/>
            <person name="Dodson R.J."/>
            <person name="Durkin A.S."/>
            <person name="Brinkac L.M."/>
            <person name="Daugherty S.C."/>
            <person name="Sullivan S.A."/>
            <person name="Rosovitz M.J."/>
            <person name="Gwinn M.L."/>
            <person name="Zhou L."/>
            <person name="Schneider D.J."/>
            <person name="Cartinhour S.W."/>
            <person name="Nelson W.C."/>
            <person name="Weidman J."/>
            <person name="Watkins K."/>
            <person name="Tran K."/>
            <person name="Khouri H."/>
            <person name="Pierson E.A."/>
            <person name="Pierson L.S. III"/>
            <person name="Thomashow L.S."/>
            <person name="Loper J.E."/>
        </authorList>
    </citation>
    <scope>NUCLEOTIDE SEQUENCE [LARGE SCALE GENOMIC DNA]</scope>
    <source>
        <strain>ATCC BAA-477 / NRRL B-23932 / Pf-5</strain>
    </source>
</reference>
<gene>
    <name evidence="1" type="primary">mtnA</name>
    <name type="ordered locus">PFL_4315</name>
</gene>
<evidence type="ECO:0000255" key="1">
    <source>
        <dbReference type="HAMAP-Rule" id="MF_01678"/>
    </source>
</evidence>
<evidence type="ECO:0000305" key="2"/>
<protein>
    <recommendedName>
        <fullName evidence="1">Methylthioribose-1-phosphate isomerase</fullName>
        <shortName evidence="1">M1Pi</shortName>
        <shortName evidence="1">MTR-1-P isomerase</shortName>
        <ecNumber evidence="1">5.3.1.23</ecNumber>
    </recommendedName>
    <alternativeName>
        <fullName evidence="1">S-methyl-5-thioribose-1-phosphate isomerase</fullName>
    </alternativeName>
</protein>
<comment type="function">
    <text evidence="1">Catalyzes the interconversion of methylthioribose-1-phosphate (MTR-1-P) into methylthioribulose-1-phosphate (MTRu-1-P).</text>
</comment>
<comment type="catalytic activity">
    <reaction evidence="1">
        <text>5-(methylsulfanyl)-alpha-D-ribose 1-phosphate = 5-(methylsulfanyl)-D-ribulose 1-phosphate</text>
        <dbReference type="Rhea" id="RHEA:19989"/>
        <dbReference type="ChEBI" id="CHEBI:58533"/>
        <dbReference type="ChEBI" id="CHEBI:58548"/>
        <dbReference type="EC" id="5.3.1.23"/>
    </reaction>
</comment>
<comment type="pathway">
    <text evidence="1">Amino-acid biosynthesis; L-methionine biosynthesis via salvage pathway; L-methionine from S-methyl-5-thio-alpha-D-ribose 1-phosphate: step 1/6.</text>
</comment>
<comment type="similarity">
    <text evidence="2">Belongs to the eIF-2B alpha/beta/delta subunits family. MtnA subfamily.</text>
</comment>
<feature type="chain" id="PRO_0000357223" description="Methylthioribose-1-phosphate isomerase">
    <location>
        <begin position="1"/>
        <end position="358"/>
    </location>
</feature>
<feature type="active site" description="Proton donor" evidence="1">
    <location>
        <position position="246"/>
    </location>
</feature>
<feature type="binding site" evidence="1">
    <location>
        <begin position="54"/>
        <end position="56"/>
    </location>
    <ligand>
        <name>substrate</name>
    </ligand>
</feature>
<feature type="binding site" evidence="1">
    <location>
        <position position="205"/>
    </location>
    <ligand>
        <name>substrate</name>
    </ligand>
</feature>
<feature type="binding site" evidence="1">
    <location>
        <begin position="256"/>
        <end position="257"/>
    </location>
    <ligand>
        <name>substrate</name>
    </ligand>
</feature>
<feature type="site" description="Transition state stabilizer" evidence="1">
    <location>
        <position position="166"/>
    </location>
</feature>
<proteinExistence type="inferred from homology"/>
<accession>Q4K8M6</accession>